<evidence type="ECO:0000250" key="1">
    <source>
        <dbReference type="UniProtKB" id="Q70PR7"/>
    </source>
</evidence>
<evidence type="ECO:0000269" key="2">
    <source>
    </source>
</evidence>
<evidence type="ECO:0000269" key="3">
    <source>
    </source>
</evidence>
<evidence type="ECO:0000303" key="4">
    <source>
    </source>
</evidence>
<evidence type="ECO:0000305" key="5"/>
<dbReference type="EC" id="2.3.1.-" evidence="3"/>
<dbReference type="EMBL" id="DS499596">
    <property type="protein sequence ID" value="EDP52285.1"/>
    <property type="molecule type" value="Genomic_DNA"/>
</dbReference>
<dbReference type="SMR" id="B0XZV3"/>
<dbReference type="EnsemblFungi" id="EDP52285">
    <property type="protein sequence ID" value="EDP52285"/>
    <property type="gene ID" value="AFUB_034490"/>
</dbReference>
<dbReference type="VEuPathDB" id="FungiDB:AFUB_034490"/>
<dbReference type="HOGENOM" id="CLU_029797_2_1_1"/>
<dbReference type="OrthoDB" id="43812at5052"/>
<dbReference type="PhylomeDB" id="B0XZV3"/>
<dbReference type="Proteomes" id="UP000001699">
    <property type="component" value="Unassembled WGS sequence"/>
</dbReference>
<dbReference type="GO" id="GO:0016746">
    <property type="term" value="F:acyltransferase activity"/>
    <property type="evidence" value="ECO:0007669"/>
    <property type="project" value="UniProtKB-KW"/>
</dbReference>
<dbReference type="Gene3D" id="3.30.559.10">
    <property type="entry name" value="Chloramphenicol acetyltransferase-like domain"/>
    <property type="match status" value="2"/>
</dbReference>
<dbReference type="InterPro" id="IPR023213">
    <property type="entry name" value="CAT-like_dom_sf"/>
</dbReference>
<dbReference type="InterPro" id="IPR051283">
    <property type="entry name" value="Sec_Metabolite_Acyltrans"/>
</dbReference>
<dbReference type="PANTHER" id="PTHR31896">
    <property type="entry name" value="FAMILY REGULATORY PROTEIN, PUTATIVE (AFU_ORTHOLOGUE AFUA_3G14730)-RELATED"/>
    <property type="match status" value="1"/>
</dbReference>
<dbReference type="PANTHER" id="PTHR31896:SF69">
    <property type="entry name" value="FAMILY REGULATORY PROTEIN, PUTATIVE (AFU_ORTHOLOGUE AFUA_3G14730)-RELATED"/>
    <property type="match status" value="1"/>
</dbReference>
<dbReference type="Pfam" id="PF02458">
    <property type="entry name" value="Transferase"/>
    <property type="match status" value="1"/>
</dbReference>
<gene>
    <name evidence="4" type="primary">sphE</name>
    <name type="ORF">AFUB_034490</name>
</gene>
<keyword id="KW-0012">Acyltransferase</keyword>
<keyword id="KW-0808">Transferase</keyword>
<comment type="function">
    <text evidence="3">Acetyltransferase; part of the gene cluster that mediates the biosynthesis of sphingofungins, bioactive molecules acting as sphingolipid inhibitors via inhibiting serine palmitoyl transferase (SPT) (PubMed:35023724). Within the pathway, sphE catalyzes the O-acetylation of the C-5 hydroxyl group of sphingofungin B to produce sphingofungin C. SphE can also convert sphingofungin B1 into sphingofungin C1 and sphingofungin B2 into sphingofungin C2 (PubMed:35023724). Sphingofungin biosynthesis starts with the PKS sphB that produces an C18 polyketide precursor 3-hydroxyoctadeca-4,10-dienoyl-ACP containing one delta-6 desaturation and one delta-12 desaturation. The aminoacyl transferase sphA uses the sphB product to produce 3-keto-presphingofungin by adding an aminomalonate molecule. SphF then reduces the C-3 ketone of 3-keto-presphingofungin which leads to presphingofungin. The cytochrome P450 monooxygenase sphH converts presphingofungin into sphingofungin B1 which is further converted to sphingofungin B by the dioxygenase sphC. SphC is also able to convert presphingofungin into sphingofungin B2. The acetyltransferase sphE acetylates sphingofungin B to produce sphingofungin C, but can also convert sphingofungin B1 into sphingofungin C1 and sphingofungin B2 into sphingofungin C2. Finally, sphingofungin C can be spontaneously converted into sphingofungin D (PubMed:35023724).</text>
</comment>
<comment type="catalytic activity">
    <reaction evidence="3">
        <text>sphingofungin B + acetyl-CoA = sphingofungin C + CoA</text>
        <dbReference type="Rhea" id="RHEA:81171"/>
        <dbReference type="ChEBI" id="CHEBI:57287"/>
        <dbReference type="ChEBI" id="CHEBI:57288"/>
        <dbReference type="ChEBI" id="CHEBI:231807"/>
        <dbReference type="ChEBI" id="CHEBI:231808"/>
    </reaction>
    <physiologicalReaction direction="left-to-right" evidence="3">
        <dbReference type="Rhea" id="RHEA:81172"/>
    </physiologicalReaction>
</comment>
<comment type="pathway">
    <text evidence="3">Secondary metabolite biosynthesis.</text>
</comment>
<comment type="subunit">
    <text evidence="1">Monomer.</text>
</comment>
<comment type="induction">
    <text evidence="3">Expression is positively regulated by the sphingofungins biosynthesis cluster-specific transcription factor sphG.</text>
</comment>
<comment type="disruption phenotype">
    <text evidence="3">Leads to an increased accumulation of sphingofungin B.</text>
</comment>
<comment type="biotechnology">
    <text evidence="2">The sphingofungins A, B, C, and D, show a limited antifungal spectrum of activity but are especially effective against Cryptococcus species, fungal pathogens causing opportunistic infections in human.</text>
</comment>
<comment type="similarity">
    <text evidence="5">Belongs to the plant acyltransferase family.</text>
</comment>
<accession>B0XZV3</accession>
<organism>
    <name type="scientific">Aspergillus fumigatus (strain CBS 144.89 / FGSC A1163 / CEA10)</name>
    <name type="common">Neosartorya fumigata</name>
    <dbReference type="NCBI Taxonomy" id="451804"/>
    <lineage>
        <taxon>Eukaryota</taxon>
        <taxon>Fungi</taxon>
        <taxon>Dikarya</taxon>
        <taxon>Ascomycota</taxon>
        <taxon>Pezizomycotina</taxon>
        <taxon>Eurotiomycetes</taxon>
        <taxon>Eurotiomycetidae</taxon>
        <taxon>Eurotiales</taxon>
        <taxon>Aspergillaceae</taxon>
        <taxon>Aspergillus</taxon>
        <taxon>Aspergillus subgen. Fumigati</taxon>
    </lineage>
</organism>
<reference key="1">
    <citation type="journal article" date="2008" name="PLoS Genet.">
        <title>Genomic islands in the pathogenic filamentous fungus Aspergillus fumigatus.</title>
        <authorList>
            <person name="Fedorova N.D."/>
            <person name="Khaldi N."/>
            <person name="Joardar V.S."/>
            <person name="Maiti R."/>
            <person name="Amedeo P."/>
            <person name="Anderson M.J."/>
            <person name="Crabtree J."/>
            <person name="Silva J.C."/>
            <person name="Badger J.H."/>
            <person name="Albarraq A."/>
            <person name="Angiuoli S."/>
            <person name="Bussey H."/>
            <person name="Bowyer P."/>
            <person name="Cotty P.J."/>
            <person name="Dyer P.S."/>
            <person name="Egan A."/>
            <person name="Galens K."/>
            <person name="Fraser-Liggett C.M."/>
            <person name="Haas B.J."/>
            <person name="Inman J.M."/>
            <person name="Kent R."/>
            <person name="Lemieux S."/>
            <person name="Malavazi I."/>
            <person name="Orvis J."/>
            <person name="Roemer T."/>
            <person name="Ronning C.M."/>
            <person name="Sundaram J.P."/>
            <person name="Sutton G."/>
            <person name="Turner G."/>
            <person name="Venter J.C."/>
            <person name="White O.R."/>
            <person name="Whitty B.R."/>
            <person name="Youngman P."/>
            <person name="Wolfe K.H."/>
            <person name="Goldman G.H."/>
            <person name="Wortman J.R."/>
            <person name="Jiang B."/>
            <person name="Denning D.W."/>
            <person name="Nierman W.C."/>
        </authorList>
    </citation>
    <scope>NUCLEOTIDE SEQUENCE [LARGE SCALE GENOMIC DNA]</scope>
    <source>
        <strain>CBS 144.89 / FGSC A1163 / CEA10</strain>
    </source>
</reference>
<reference key="2">
    <citation type="journal article" date="1992" name="J. Antibiot.">
        <title>Sphingofungins A, B, C, and D; a new family of antifungal agents. I. Fermentation, isolation, and biological activity.</title>
        <authorList>
            <person name="VanMiddlesworth F."/>
            <person name="Giacobbe R.A."/>
            <person name="Lopez M."/>
            <person name="Garrity G."/>
            <person name="Bland J.A."/>
            <person name="Bartizal K."/>
            <person name="Fromtling R.A."/>
            <person name="Polishook J."/>
            <person name="Zweerink M."/>
            <person name="Edison A.M."/>
        </authorList>
    </citation>
    <scope>BIOTECHNOLOGY</scope>
</reference>
<reference key="3">
    <citation type="journal article" date="2022" name="ACS Chem. Biol.">
        <title>Biosynthesis of the sphingolipid inhibitors sphingofungins in filamentous fungi requires aminomalonate as a metabolic precursor.</title>
        <authorList>
            <person name="Bissell A.U."/>
            <person name="Rautschek J."/>
            <person name="Hoefgen S."/>
            <person name="Raguz L."/>
            <person name="Mattern D.J."/>
            <person name="Saeed N."/>
            <person name="Janevska S."/>
            <person name="Jojic K."/>
            <person name="Huang Y."/>
            <person name="Kufs J.E."/>
            <person name="Herboeck B."/>
            <person name="Guo H."/>
            <person name="Hillmann F."/>
            <person name="Beemelmanns C."/>
            <person name="Valiante V."/>
        </authorList>
    </citation>
    <scope>FUNCTION</scope>
    <scope>INDUCTION</scope>
    <scope>DISRUPTION PHENOTYPE</scope>
    <scope>CATALYTIC ACTIVITY</scope>
    <scope>PATHWAY</scope>
</reference>
<feature type="chain" id="PRO_0000461281" description="Acetyltransferase sphE">
    <location>
        <begin position="1"/>
        <end position="515"/>
    </location>
</feature>
<feature type="active site" description="Proton acceptor" evidence="1">
    <location>
        <position position="184"/>
    </location>
</feature>
<feature type="active site" description="Proton acceptor" evidence="1">
    <location>
        <position position="438"/>
    </location>
</feature>
<proteinExistence type="evidence at protein level"/>
<name>SPHE_ASPFC</name>
<sequence>MGFLRFGRESAPPPTVQSDTIIPFHYWDDDHHTRGLSFDVTFRVDDILDPEKLRCALSRLLELGDWRKLGARIRRNAEGGLEYHVPQCFDDKRPGFAYSTVAYDMNVADHPQASRLAQPHYLDAAGRPAVQDTTYTATPEFRSFIRTPAFPDRLEGWLRSDSPQLGVRIITFLDATLVTVSFLHSLTDMMGLDAVLDAWSAVLRGREDEVKSFVGFAHDPLAGLTESKTEPLQKYVFADTLLLGWTWFWFALRYIVTIELFWQHREEERVIFLPAKHLQQMRSKAMAELTARGAHDSDTPLFVSEGDVLFAWWTRVVLRAEKPDPSRTVNMRNTYCCRSILAELGHIPSATCALVTNAVFATLTFLSVRQVLEEPLGFTAFEIRKSLIQQRNAEQLQALDRIQRKTLDNAHHPALFGNPSMYTVMMSNWVKAKLFQVDFSAAVIRKGMATGKRSNQLGRPSCIQGTGTKGYATRNTGVVIGKDAAGNFWLLYSLRKEIWPAVEQQLLSMSLDDAA</sequence>
<protein>
    <recommendedName>
        <fullName evidence="4">Acetyltransferase sphE</fullName>
        <ecNumber evidence="3">2.3.1.-</ecNumber>
    </recommendedName>
    <alternativeName>
        <fullName evidence="4">Sphingofungin biosynthesis cluster protein E</fullName>
    </alternativeName>
</protein>